<name>RS15_BRUME</name>
<keyword id="KW-0687">Ribonucleoprotein</keyword>
<keyword id="KW-0689">Ribosomal protein</keyword>
<keyword id="KW-0694">RNA-binding</keyword>
<keyword id="KW-0699">rRNA-binding</keyword>
<accession>Q8YEB6</accession>
<evidence type="ECO:0000255" key="1">
    <source>
        <dbReference type="HAMAP-Rule" id="MF_01343"/>
    </source>
</evidence>
<evidence type="ECO:0000305" key="2"/>
<dbReference type="EMBL" id="AE008917">
    <property type="protein sequence ID" value="AAL53143.1"/>
    <property type="status" value="ALT_INIT"/>
    <property type="molecule type" value="Genomic_DNA"/>
</dbReference>
<dbReference type="PIR" id="AD3497">
    <property type="entry name" value="AD3497"/>
</dbReference>
<dbReference type="RefSeq" id="WP_002965230.1">
    <property type="nucleotide sequence ID" value="NZ_GG703778.1"/>
</dbReference>
<dbReference type="SMR" id="Q8YEB6"/>
<dbReference type="GeneID" id="97534579"/>
<dbReference type="KEGG" id="bme:BMEI1962"/>
<dbReference type="KEGG" id="bmel:DK63_1528"/>
<dbReference type="PATRIC" id="fig|224914.52.peg.1614"/>
<dbReference type="eggNOG" id="COG0184">
    <property type="taxonomic scope" value="Bacteria"/>
</dbReference>
<dbReference type="Proteomes" id="UP000000419">
    <property type="component" value="Chromosome I"/>
</dbReference>
<dbReference type="GO" id="GO:0022627">
    <property type="term" value="C:cytosolic small ribosomal subunit"/>
    <property type="evidence" value="ECO:0007669"/>
    <property type="project" value="TreeGrafter"/>
</dbReference>
<dbReference type="GO" id="GO:0019843">
    <property type="term" value="F:rRNA binding"/>
    <property type="evidence" value="ECO:0007669"/>
    <property type="project" value="UniProtKB-UniRule"/>
</dbReference>
<dbReference type="GO" id="GO:0003735">
    <property type="term" value="F:structural constituent of ribosome"/>
    <property type="evidence" value="ECO:0007669"/>
    <property type="project" value="InterPro"/>
</dbReference>
<dbReference type="GO" id="GO:0006412">
    <property type="term" value="P:translation"/>
    <property type="evidence" value="ECO:0007669"/>
    <property type="project" value="UniProtKB-UniRule"/>
</dbReference>
<dbReference type="CDD" id="cd00353">
    <property type="entry name" value="Ribosomal_S15p_S13e"/>
    <property type="match status" value="1"/>
</dbReference>
<dbReference type="FunFam" id="1.10.287.10:FF:000002">
    <property type="entry name" value="30S ribosomal protein S15"/>
    <property type="match status" value="1"/>
</dbReference>
<dbReference type="Gene3D" id="6.10.250.3130">
    <property type="match status" value="1"/>
</dbReference>
<dbReference type="Gene3D" id="1.10.287.10">
    <property type="entry name" value="S15/NS1, RNA-binding"/>
    <property type="match status" value="1"/>
</dbReference>
<dbReference type="HAMAP" id="MF_01343_B">
    <property type="entry name" value="Ribosomal_uS15_B"/>
    <property type="match status" value="1"/>
</dbReference>
<dbReference type="InterPro" id="IPR000589">
    <property type="entry name" value="Ribosomal_uS15"/>
</dbReference>
<dbReference type="InterPro" id="IPR005290">
    <property type="entry name" value="Ribosomal_uS15_bac-type"/>
</dbReference>
<dbReference type="InterPro" id="IPR009068">
    <property type="entry name" value="uS15_NS1_RNA-bd_sf"/>
</dbReference>
<dbReference type="NCBIfam" id="TIGR00952">
    <property type="entry name" value="S15_bact"/>
    <property type="match status" value="1"/>
</dbReference>
<dbReference type="PANTHER" id="PTHR23321">
    <property type="entry name" value="RIBOSOMAL PROTEIN S15, BACTERIAL AND ORGANELLAR"/>
    <property type="match status" value="1"/>
</dbReference>
<dbReference type="PANTHER" id="PTHR23321:SF26">
    <property type="entry name" value="SMALL RIBOSOMAL SUBUNIT PROTEIN US15M"/>
    <property type="match status" value="1"/>
</dbReference>
<dbReference type="Pfam" id="PF00312">
    <property type="entry name" value="Ribosomal_S15"/>
    <property type="match status" value="1"/>
</dbReference>
<dbReference type="SMART" id="SM01387">
    <property type="entry name" value="Ribosomal_S15"/>
    <property type="match status" value="1"/>
</dbReference>
<dbReference type="SUPFAM" id="SSF47060">
    <property type="entry name" value="S15/NS1 RNA-binding domain"/>
    <property type="match status" value="1"/>
</dbReference>
<dbReference type="PROSITE" id="PS00362">
    <property type="entry name" value="RIBOSOMAL_S15"/>
    <property type="match status" value="1"/>
</dbReference>
<organism>
    <name type="scientific">Brucella melitensis biotype 1 (strain ATCC 23456 / CCUG 17765 / NCTC 10094 / 16M)</name>
    <dbReference type="NCBI Taxonomy" id="224914"/>
    <lineage>
        <taxon>Bacteria</taxon>
        <taxon>Pseudomonadati</taxon>
        <taxon>Pseudomonadota</taxon>
        <taxon>Alphaproteobacteria</taxon>
        <taxon>Hyphomicrobiales</taxon>
        <taxon>Brucellaceae</taxon>
        <taxon>Brucella/Ochrobactrum group</taxon>
        <taxon>Brucella</taxon>
    </lineage>
</organism>
<feature type="chain" id="PRO_0000115400" description="Small ribosomal subunit protein uS15">
    <location>
        <begin position="1"/>
        <end position="89"/>
    </location>
</feature>
<sequence>MSITAERKQALIKEYATKEGDTGSPEVQVAVLSERIANLTEHFKGHKNDNHSRRGLLKLVSQRRRLLDYVKGVDHARYQALITRLGLRR</sequence>
<protein>
    <recommendedName>
        <fullName evidence="1">Small ribosomal subunit protein uS15</fullName>
    </recommendedName>
    <alternativeName>
        <fullName evidence="2">30S ribosomal protein S15</fullName>
    </alternativeName>
</protein>
<gene>
    <name evidence="1" type="primary">rpsO</name>
    <name type="ordered locus">BMEI1962</name>
</gene>
<proteinExistence type="inferred from homology"/>
<comment type="function">
    <text evidence="1">One of the primary rRNA binding proteins, it binds directly to 16S rRNA where it helps nucleate assembly of the platform of the 30S subunit by binding and bridging several RNA helices of the 16S rRNA.</text>
</comment>
<comment type="function">
    <text evidence="1">Forms an intersubunit bridge (bridge B4) with the 23S rRNA of the 50S subunit in the ribosome.</text>
</comment>
<comment type="subunit">
    <text evidence="1">Part of the 30S ribosomal subunit. Forms a bridge to the 50S subunit in the 70S ribosome, contacting the 23S rRNA.</text>
</comment>
<comment type="similarity">
    <text evidence="1">Belongs to the universal ribosomal protein uS15 family.</text>
</comment>
<comment type="sequence caution" evidence="2">
    <conflict type="erroneous initiation">
        <sequence resource="EMBL-CDS" id="AAL53143"/>
    </conflict>
</comment>
<reference key="1">
    <citation type="journal article" date="2002" name="Proc. Natl. Acad. Sci. U.S.A.">
        <title>The genome sequence of the facultative intracellular pathogen Brucella melitensis.</title>
        <authorList>
            <person name="DelVecchio V.G."/>
            <person name="Kapatral V."/>
            <person name="Redkar R.J."/>
            <person name="Patra G."/>
            <person name="Mujer C."/>
            <person name="Los T."/>
            <person name="Ivanova N."/>
            <person name="Anderson I."/>
            <person name="Bhattacharyya A."/>
            <person name="Lykidis A."/>
            <person name="Reznik G."/>
            <person name="Jablonski L."/>
            <person name="Larsen N."/>
            <person name="D'Souza M."/>
            <person name="Bernal A."/>
            <person name="Mazur M."/>
            <person name="Goltsman E."/>
            <person name="Selkov E."/>
            <person name="Elzer P.H."/>
            <person name="Hagius S."/>
            <person name="O'Callaghan D."/>
            <person name="Letesson J.-J."/>
            <person name="Haselkorn R."/>
            <person name="Kyrpides N.C."/>
            <person name="Overbeek R."/>
        </authorList>
    </citation>
    <scope>NUCLEOTIDE SEQUENCE [LARGE SCALE GENOMIC DNA]</scope>
    <source>
        <strain>ATCC 23456 / CCUG 17765 / NCTC 10094 / 16M</strain>
    </source>
</reference>